<protein>
    <recommendedName>
        <fullName evidence="1">GMP synthase [glutamine-hydrolyzing]</fullName>
        <ecNumber evidence="1">6.3.5.2</ecNumber>
    </recommendedName>
    <alternativeName>
        <fullName evidence="1">GMP synthetase</fullName>
    </alternativeName>
    <alternativeName>
        <fullName evidence="1">Glutamine amidotransferase</fullName>
    </alternativeName>
</protein>
<sequence>MTKNIHKHRILILDFGSQYTQLLARRVREIGVYCELWAWDVTEAQIREFNPSGIILSGSPESTIENGSPRAPDYVFTAGVPVLGVCYGMQTMAIQLGGKVESSNQREFGYAQVEIKADSALIRDIKDAINPAGEAVLDVWMSHGDKVAEIPADFVTVASTDTCPFAIMANEEKRFYGVQFHPEVTHTKQGLRLLERFVLGICGCEALWTSATIIEDAIVRLREQIGDDHVILGLSGGVDSSVTAMLLHRAIGKRLTCVFVDNGLLRLNEADQVLEMFGDKFGLNIVHVAAEDRFLSALTGVDEPEAKRKIIGRVFVELFDEEACKQEQVKWLAQGTIYPDVIESAASATGKAHVIKSHHNVGGLPKEMKLGLVEPLKELFKDEVRKIGLELGLPYDMLYRHPFPGPGLGVRVLGEVKKEYCDLLRRADAIFIEELHKADLYNKVSQAFTVFLPVRSVGVMGDGRKYDWVVSLRAVETVDFMTAHWAHLPYDFLGRVSNRIINEVNGISRVVYDISGKPPATIEWE</sequence>
<dbReference type="EC" id="6.3.5.2" evidence="1"/>
<dbReference type="EMBL" id="CP000308">
    <property type="protein sequence ID" value="ABG14276.1"/>
    <property type="molecule type" value="Genomic_DNA"/>
</dbReference>
<dbReference type="RefSeq" id="WP_002209807.1">
    <property type="nucleotide sequence ID" value="NZ_CP009906.1"/>
</dbReference>
<dbReference type="SMR" id="Q1C5J6"/>
<dbReference type="GeneID" id="57975827"/>
<dbReference type="KEGG" id="ypa:YPA_2311"/>
<dbReference type="UniPathway" id="UPA00189">
    <property type="reaction ID" value="UER00296"/>
</dbReference>
<dbReference type="Proteomes" id="UP000001971">
    <property type="component" value="Chromosome"/>
</dbReference>
<dbReference type="GO" id="GO:0005829">
    <property type="term" value="C:cytosol"/>
    <property type="evidence" value="ECO:0007669"/>
    <property type="project" value="TreeGrafter"/>
</dbReference>
<dbReference type="GO" id="GO:0005524">
    <property type="term" value="F:ATP binding"/>
    <property type="evidence" value="ECO:0007669"/>
    <property type="project" value="UniProtKB-UniRule"/>
</dbReference>
<dbReference type="GO" id="GO:0003921">
    <property type="term" value="F:GMP synthase activity"/>
    <property type="evidence" value="ECO:0007669"/>
    <property type="project" value="InterPro"/>
</dbReference>
<dbReference type="CDD" id="cd01742">
    <property type="entry name" value="GATase1_GMP_Synthase"/>
    <property type="match status" value="1"/>
</dbReference>
<dbReference type="CDD" id="cd01997">
    <property type="entry name" value="GMP_synthase_C"/>
    <property type="match status" value="1"/>
</dbReference>
<dbReference type="FunFam" id="3.30.300.10:FF:000002">
    <property type="entry name" value="GMP synthase [glutamine-hydrolyzing]"/>
    <property type="match status" value="1"/>
</dbReference>
<dbReference type="FunFam" id="3.40.50.620:FF:000001">
    <property type="entry name" value="GMP synthase [glutamine-hydrolyzing]"/>
    <property type="match status" value="1"/>
</dbReference>
<dbReference type="FunFam" id="3.40.50.880:FF:000001">
    <property type="entry name" value="GMP synthase [glutamine-hydrolyzing]"/>
    <property type="match status" value="1"/>
</dbReference>
<dbReference type="Gene3D" id="3.30.300.10">
    <property type="match status" value="1"/>
</dbReference>
<dbReference type="Gene3D" id="3.40.50.880">
    <property type="match status" value="1"/>
</dbReference>
<dbReference type="Gene3D" id="3.40.50.620">
    <property type="entry name" value="HUPs"/>
    <property type="match status" value="1"/>
</dbReference>
<dbReference type="HAMAP" id="MF_00344">
    <property type="entry name" value="GMP_synthase"/>
    <property type="match status" value="1"/>
</dbReference>
<dbReference type="InterPro" id="IPR029062">
    <property type="entry name" value="Class_I_gatase-like"/>
</dbReference>
<dbReference type="InterPro" id="IPR017926">
    <property type="entry name" value="GATASE"/>
</dbReference>
<dbReference type="InterPro" id="IPR001674">
    <property type="entry name" value="GMP_synth_C"/>
</dbReference>
<dbReference type="InterPro" id="IPR004739">
    <property type="entry name" value="GMP_synth_GATase"/>
</dbReference>
<dbReference type="InterPro" id="IPR022955">
    <property type="entry name" value="GMP_synthase"/>
</dbReference>
<dbReference type="InterPro" id="IPR025777">
    <property type="entry name" value="GMPS_ATP_PPase_dom"/>
</dbReference>
<dbReference type="InterPro" id="IPR022310">
    <property type="entry name" value="NAD/GMP_synthase"/>
</dbReference>
<dbReference type="InterPro" id="IPR014729">
    <property type="entry name" value="Rossmann-like_a/b/a_fold"/>
</dbReference>
<dbReference type="NCBIfam" id="TIGR00884">
    <property type="entry name" value="guaA_Cterm"/>
    <property type="match status" value="1"/>
</dbReference>
<dbReference type="NCBIfam" id="TIGR00888">
    <property type="entry name" value="guaA_Nterm"/>
    <property type="match status" value="1"/>
</dbReference>
<dbReference type="NCBIfam" id="NF000848">
    <property type="entry name" value="PRK00074.1"/>
    <property type="match status" value="1"/>
</dbReference>
<dbReference type="PANTHER" id="PTHR11922:SF2">
    <property type="entry name" value="GMP SYNTHASE [GLUTAMINE-HYDROLYZING]"/>
    <property type="match status" value="1"/>
</dbReference>
<dbReference type="PANTHER" id="PTHR11922">
    <property type="entry name" value="GMP SYNTHASE-RELATED"/>
    <property type="match status" value="1"/>
</dbReference>
<dbReference type="Pfam" id="PF00117">
    <property type="entry name" value="GATase"/>
    <property type="match status" value="1"/>
</dbReference>
<dbReference type="Pfam" id="PF00958">
    <property type="entry name" value="GMP_synt_C"/>
    <property type="match status" value="1"/>
</dbReference>
<dbReference type="Pfam" id="PF02540">
    <property type="entry name" value="NAD_synthase"/>
    <property type="match status" value="1"/>
</dbReference>
<dbReference type="PRINTS" id="PR00097">
    <property type="entry name" value="ANTSNTHASEII"/>
</dbReference>
<dbReference type="PRINTS" id="PR00096">
    <property type="entry name" value="GATASE"/>
</dbReference>
<dbReference type="SUPFAM" id="SSF52402">
    <property type="entry name" value="Adenine nucleotide alpha hydrolases-like"/>
    <property type="match status" value="1"/>
</dbReference>
<dbReference type="SUPFAM" id="SSF52317">
    <property type="entry name" value="Class I glutamine amidotransferase-like"/>
    <property type="match status" value="1"/>
</dbReference>
<dbReference type="SUPFAM" id="SSF54810">
    <property type="entry name" value="GMP synthetase C-terminal dimerisation domain"/>
    <property type="match status" value="1"/>
</dbReference>
<dbReference type="PROSITE" id="PS51273">
    <property type="entry name" value="GATASE_TYPE_1"/>
    <property type="match status" value="1"/>
</dbReference>
<dbReference type="PROSITE" id="PS51553">
    <property type="entry name" value="GMPS_ATP_PPASE"/>
    <property type="match status" value="1"/>
</dbReference>
<evidence type="ECO:0000255" key="1">
    <source>
        <dbReference type="HAMAP-Rule" id="MF_00344"/>
    </source>
</evidence>
<gene>
    <name evidence="1" type="primary">guaA</name>
    <name type="ordered locus">YPA_2311</name>
</gene>
<name>GUAA_YERPA</name>
<accession>Q1C5J6</accession>
<reference key="1">
    <citation type="journal article" date="2006" name="J. Bacteriol.">
        <title>Complete genome sequence of Yersinia pestis strains Antiqua and Nepal516: evidence of gene reduction in an emerging pathogen.</title>
        <authorList>
            <person name="Chain P.S.G."/>
            <person name="Hu P."/>
            <person name="Malfatti S.A."/>
            <person name="Radnedge L."/>
            <person name="Larimer F."/>
            <person name="Vergez L.M."/>
            <person name="Worsham P."/>
            <person name="Chu M.C."/>
            <person name="Andersen G.L."/>
        </authorList>
    </citation>
    <scope>NUCLEOTIDE SEQUENCE [LARGE SCALE GENOMIC DNA]</scope>
    <source>
        <strain>Antiqua</strain>
    </source>
</reference>
<comment type="function">
    <text evidence="1">Catalyzes the synthesis of GMP from XMP.</text>
</comment>
<comment type="catalytic activity">
    <reaction evidence="1">
        <text>XMP + L-glutamine + ATP + H2O = GMP + L-glutamate + AMP + diphosphate + 2 H(+)</text>
        <dbReference type="Rhea" id="RHEA:11680"/>
        <dbReference type="ChEBI" id="CHEBI:15377"/>
        <dbReference type="ChEBI" id="CHEBI:15378"/>
        <dbReference type="ChEBI" id="CHEBI:29985"/>
        <dbReference type="ChEBI" id="CHEBI:30616"/>
        <dbReference type="ChEBI" id="CHEBI:33019"/>
        <dbReference type="ChEBI" id="CHEBI:57464"/>
        <dbReference type="ChEBI" id="CHEBI:58115"/>
        <dbReference type="ChEBI" id="CHEBI:58359"/>
        <dbReference type="ChEBI" id="CHEBI:456215"/>
        <dbReference type="EC" id="6.3.5.2"/>
    </reaction>
</comment>
<comment type="pathway">
    <text evidence="1">Purine metabolism; GMP biosynthesis; GMP from XMP (L-Gln route): step 1/1.</text>
</comment>
<comment type="subunit">
    <text evidence="1">Homodimer.</text>
</comment>
<feature type="chain" id="PRO_1000120458" description="GMP synthase [glutamine-hydrolyzing]">
    <location>
        <begin position="1"/>
        <end position="525"/>
    </location>
</feature>
<feature type="domain" description="Glutamine amidotransferase type-1" evidence="1">
    <location>
        <begin position="9"/>
        <end position="207"/>
    </location>
</feature>
<feature type="domain" description="GMPS ATP-PPase" evidence="1">
    <location>
        <begin position="208"/>
        <end position="400"/>
    </location>
</feature>
<feature type="active site" description="Nucleophile" evidence="1">
    <location>
        <position position="86"/>
    </location>
</feature>
<feature type="active site" evidence="1">
    <location>
        <position position="181"/>
    </location>
</feature>
<feature type="active site" evidence="1">
    <location>
        <position position="183"/>
    </location>
</feature>
<feature type="binding site" evidence="1">
    <location>
        <begin position="235"/>
        <end position="241"/>
    </location>
    <ligand>
        <name>ATP</name>
        <dbReference type="ChEBI" id="CHEBI:30616"/>
    </ligand>
</feature>
<organism>
    <name type="scientific">Yersinia pestis bv. Antiqua (strain Antiqua)</name>
    <dbReference type="NCBI Taxonomy" id="360102"/>
    <lineage>
        <taxon>Bacteria</taxon>
        <taxon>Pseudomonadati</taxon>
        <taxon>Pseudomonadota</taxon>
        <taxon>Gammaproteobacteria</taxon>
        <taxon>Enterobacterales</taxon>
        <taxon>Yersiniaceae</taxon>
        <taxon>Yersinia</taxon>
    </lineage>
</organism>
<keyword id="KW-0067">ATP-binding</keyword>
<keyword id="KW-0315">Glutamine amidotransferase</keyword>
<keyword id="KW-0332">GMP biosynthesis</keyword>
<keyword id="KW-0436">Ligase</keyword>
<keyword id="KW-0547">Nucleotide-binding</keyword>
<keyword id="KW-0658">Purine biosynthesis</keyword>
<proteinExistence type="inferred from homology"/>